<sequence length="112" mass="13173">MNDHLKRGNLLWEGSRMFLPEHKQSLLERKRLKQKLQKPILDPDKLEEMNQTLCAAMEFAQDITVSCFQDGEIVCCTGKICRYEEFEKAVWIKGDEDQLYKLKLDQVLDIVL</sequence>
<reference key="1">
    <citation type="journal article" date="1996" name="Microbiology">
        <title>Systematic sequencing of the 283 kb 210 degrees-232 degrees region of the Bacillus subtilis genome containing the skin element and many sporulation genes.</title>
        <authorList>
            <person name="Mizuno M."/>
            <person name="Masuda S."/>
            <person name="Takemaru K."/>
            <person name="Hosono S."/>
            <person name="Sato T."/>
            <person name="Takeuchi M."/>
            <person name="Kobayashi Y."/>
        </authorList>
    </citation>
    <scope>NUCLEOTIDE SEQUENCE [GENOMIC DNA]</scope>
    <source>
        <strain>168 / JH642</strain>
    </source>
</reference>
<reference key="2">
    <citation type="journal article" date="1997" name="Nature">
        <title>The complete genome sequence of the Gram-positive bacterium Bacillus subtilis.</title>
        <authorList>
            <person name="Kunst F."/>
            <person name="Ogasawara N."/>
            <person name="Moszer I."/>
            <person name="Albertini A.M."/>
            <person name="Alloni G."/>
            <person name="Azevedo V."/>
            <person name="Bertero M.G."/>
            <person name="Bessieres P."/>
            <person name="Bolotin A."/>
            <person name="Borchert S."/>
            <person name="Borriss R."/>
            <person name="Boursier L."/>
            <person name="Brans A."/>
            <person name="Braun M."/>
            <person name="Brignell S.C."/>
            <person name="Bron S."/>
            <person name="Brouillet S."/>
            <person name="Bruschi C.V."/>
            <person name="Caldwell B."/>
            <person name="Capuano V."/>
            <person name="Carter N.M."/>
            <person name="Choi S.-K."/>
            <person name="Codani J.-J."/>
            <person name="Connerton I.F."/>
            <person name="Cummings N.J."/>
            <person name="Daniel R.A."/>
            <person name="Denizot F."/>
            <person name="Devine K.M."/>
            <person name="Duesterhoeft A."/>
            <person name="Ehrlich S.D."/>
            <person name="Emmerson P.T."/>
            <person name="Entian K.-D."/>
            <person name="Errington J."/>
            <person name="Fabret C."/>
            <person name="Ferrari E."/>
            <person name="Foulger D."/>
            <person name="Fritz C."/>
            <person name="Fujita M."/>
            <person name="Fujita Y."/>
            <person name="Fuma S."/>
            <person name="Galizzi A."/>
            <person name="Galleron N."/>
            <person name="Ghim S.-Y."/>
            <person name="Glaser P."/>
            <person name="Goffeau A."/>
            <person name="Golightly E.J."/>
            <person name="Grandi G."/>
            <person name="Guiseppi G."/>
            <person name="Guy B.J."/>
            <person name="Haga K."/>
            <person name="Haiech J."/>
            <person name="Harwood C.R."/>
            <person name="Henaut A."/>
            <person name="Hilbert H."/>
            <person name="Holsappel S."/>
            <person name="Hosono S."/>
            <person name="Hullo M.-F."/>
            <person name="Itaya M."/>
            <person name="Jones L.-M."/>
            <person name="Joris B."/>
            <person name="Karamata D."/>
            <person name="Kasahara Y."/>
            <person name="Klaerr-Blanchard M."/>
            <person name="Klein C."/>
            <person name="Kobayashi Y."/>
            <person name="Koetter P."/>
            <person name="Koningstein G."/>
            <person name="Krogh S."/>
            <person name="Kumano M."/>
            <person name="Kurita K."/>
            <person name="Lapidus A."/>
            <person name="Lardinois S."/>
            <person name="Lauber J."/>
            <person name="Lazarevic V."/>
            <person name="Lee S.-M."/>
            <person name="Levine A."/>
            <person name="Liu H."/>
            <person name="Masuda S."/>
            <person name="Mauel C."/>
            <person name="Medigue C."/>
            <person name="Medina N."/>
            <person name="Mellado R.P."/>
            <person name="Mizuno M."/>
            <person name="Moestl D."/>
            <person name="Nakai S."/>
            <person name="Noback M."/>
            <person name="Noone D."/>
            <person name="O'Reilly M."/>
            <person name="Ogawa K."/>
            <person name="Ogiwara A."/>
            <person name="Oudega B."/>
            <person name="Park S.-H."/>
            <person name="Parro V."/>
            <person name="Pohl T.M."/>
            <person name="Portetelle D."/>
            <person name="Porwollik S."/>
            <person name="Prescott A.M."/>
            <person name="Presecan E."/>
            <person name="Pujic P."/>
            <person name="Purnelle B."/>
            <person name="Rapoport G."/>
            <person name="Rey M."/>
            <person name="Reynolds S."/>
            <person name="Rieger M."/>
            <person name="Rivolta C."/>
            <person name="Rocha E."/>
            <person name="Roche B."/>
            <person name="Rose M."/>
            <person name="Sadaie Y."/>
            <person name="Sato T."/>
            <person name="Scanlan E."/>
            <person name="Schleich S."/>
            <person name="Schroeter R."/>
            <person name="Scoffone F."/>
            <person name="Sekiguchi J."/>
            <person name="Sekowska A."/>
            <person name="Seror S.J."/>
            <person name="Serror P."/>
            <person name="Shin B.-S."/>
            <person name="Soldo B."/>
            <person name="Sorokin A."/>
            <person name="Tacconi E."/>
            <person name="Takagi T."/>
            <person name="Takahashi H."/>
            <person name="Takemaru K."/>
            <person name="Takeuchi M."/>
            <person name="Tamakoshi A."/>
            <person name="Tanaka T."/>
            <person name="Terpstra P."/>
            <person name="Tognoni A."/>
            <person name="Tosato V."/>
            <person name="Uchiyama S."/>
            <person name="Vandenbol M."/>
            <person name="Vannier F."/>
            <person name="Vassarotti A."/>
            <person name="Viari A."/>
            <person name="Wambutt R."/>
            <person name="Wedler E."/>
            <person name="Wedler H."/>
            <person name="Weitzenegger T."/>
            <person name="Winters P."/>
            <person name="Wipat A."/>
            <person name="Yamamoto H."/>
            <person name="Yamane K."/>
            <person name="Yasumoto K."/>
            <person name="Yata K."/>
            <person name="Yoshida K."/>
            <person name="Yoshikawa H.-F."/>
            <person name="Zumstein E."/>
            <person name="Yoshikawa H."/>
            <person name="Danchin A."/>
        </authorList>
    </citation>
    <scope>NUCLEOTIDE SEQUENCE [LARGE SCALE GENOMIC DNA]</scope>
    <source>
        <strain>168</strain>
    </source>
</reference>
<organism>
    <name type="scientific">Bacillus subtilis (strain 168)</name>
    <dbReference type="NCBI Taxonomy" id="224308"/>
    <lineage>
        <taxon>Bacteria</taxon>
        <taxon>Bacillati</taxon>
        <taxon>Bacillota</taxon>
        <taxon>Bacilli</taxon>
        <taxon>Bacillales</taxon>
        <taxon>Bacillaceae</taxon>
        <taxon>Bacillus</taxon>
    </lineage>
</organism>
<accession>P54561</accession>
<dbReference type="EMBL" id="D84432">
    <property type="protein sequence ID" value="BAA12630.1"/>
    <property type="molecule type" value="Genomic_DNA"/>
</dbReference>
<dbReference type="EMBL" id="AL009126">
    <property type="protein sequence ID" value="CAB14302.1"/>
    <property type="molecule type" value="Genomic_DNA"/>
</dbReference>
<dbReference type="PIR" id="H69965">
    <property type="entry name" value="H69965"/>
</dbReference>
<dbReference type="RefSeq" id="NP_390251.1">
    <property type="nucleotide sequence ID" value="NC_000964.3"/>
</dbReference>
<dbReference type="RefSeq" id="WP_004398477.1">
    <property type="nucleotide sequence ID" value="NZ_OZ025638.1"/>
</dbReference>
<dbReference type="SMR" id="P54561"/>
<dbReference type="FunCoup" id="P54561">
    <property type="interactions" value="219"/>
</dbReference>
<dbReference type="STRING" id="224308.BSU23700"/>
<dbReference type="PaxDb" id="224308-BSU23700"/>
<dbReference type="EnsemblBacteria" id="CAB14302">
    <property type="protein sequence ID" value="CAB14302"/>
    <property type="gene ID" value="BSU_23700"/>
</dbReference>
<dbReference type="GeneID" id="938710"/>
<dbReference type="KEGG" id="bsu:BSU23700"/>
<dbReference type="PATRIC" id="fig|224308.179.peg.2583"/>
<dbReference type="InParanoid" id="P54561"/>
<dbReference type="OrthoDB" id="2376882at2"/>
<dbReference type="BioCyc" id="BSUB:BSU23700-MONOMER"/>
<dbReference type="Proteomes" id="UP000001570">
    <property type="component" value="Chromosome"/>
</dbReference>
<dbReference type="InterPro" id="IPR014962">
    <property type="entry name" value="YolD"/>
</dbReference>
<dbReference type="PANTHER" id="PTHR40051">
    <property type="entry name" value="IG HYPOTHETICAL 15966"/>
    <property type="match status" value="1"/>
</dbReference>
<dbReference type="PANTHER" id="PTHR40051:SF1">
    <property type="entry name" value="YOLD-LIKE FAMILY PROTEIN"/>
    <property type="match status" value="1"/>
</dbReference>
<dbReference type="Pfam" id="PF08863">
    <property type="entry name" value="YolD"/>
    <property type="match status" value="1"/>
</dbReference>
<protein>
    <recommendedName>
        <fullName>Uncharacterized protein YqjX</fullName>
    </recommendedName>
</protein>
<keyword id="KW-1185">Reference proteome</keyword>
<name>YQJX_BACSU</name>
<feature type="chain" id="PRO_0000049836" description="Uncharacterized protein YqjX">
    <location>
        <begin position="1"/>
        <end position="112"/>
    </location>
</feature>
<gene>
    <name type="primary">yqjX</name>
    <name type="ordered locus">BSU23700</name>
</gene>
<proteinExistence type="predicted"/>